<dbReference type="EMBL" id="AE017333">
    <property type="protein sequence ID" value="AAU42230.1"/>
    <property type="molecule type" value="Genomic_DNA"/>
</dbReference>
<dbReference type="EMBL" id="CP000002">
    <property type="protein sequence ID" value="AAU24862.1"/>
    <property type="molecule type" value="Genomic_DNA"/>
</dbReference>
<dbReference type="RefSeq" id="WP_003184941.1">
    <property type="nucleotide sequence ID" value="NC_006322.1"/>
</dbReference>
<dbReference type="SMR" id="Q65FD4"/>
<dbReference type="STRING" id="279010.BL03152"/>
<dbReference type="KEGG" id="bld:BLi03401"/>
<dbReference type="KEGG" id="bli:BL03152"/>
<dbReference type="eggNOG" id="COG4844">
    <property type="taxonomic scope" value="Bacteria"/>
</dbReference>
<dbReference type="HOGENOM" id="CLU_182025_0_0_9"/>
<dbReference type="Proteomes" id="UP000000606">
    <property type="component" value="Chromosome"/>
</dbReference>
<dbReference type="HAMAP" id="MF_01542">
    <property type="entry name" value="UPF0349"/>
    <property type="match status" value="1"/>
</dbReference>
<dbReference type="InterPro" id="IPR009910">
    <property type="entry name" value="DUF1450"/>
</dbReference>
<dbReference type="InterPro" id="IPR022916">
    <property type="entry name" value="UPF0349"/>
</dbReference>
<dbReference type="NCBIfam" id="NF010190">
    <property type="entry name" value="PRK13669.1"/>
    <property type="match status" value="1"/>
</dbReference>
<dbReference type="Pfam" id="PF07293">
    <property type="entry name" value="DUF1450"/>
    <property type="match status" value="1"/>
</dbReference>
<evidence type="ECO:0000255" key="1">
    <source>
        <dbReference type="HAMAP-Rule" id="MF_01542"/>
    </source>
</evidence>
<reference key="1">
    <citation type="journal article" date="2004" name="J. Mol. Microbiol. Biotechnol.">
        <title>The complete genome sequence of Bacillus licheniformis DSM13, an organism with great industrial potential.</title>
        <authorList>
            <person name="Veith B."/>
            <person name="Herzberg C."/>
            <person name="Steckel S."/>
            <person name="Feesche J."/>
            <person name="Maurer K.H."/>
            <person name="Ehrenreich P."/>
            <person name="Baeumer S."/>
            <person name="Henne A."/>
            <person name="Liesegang H."/>
            <person name="Merkl R."/>
            <person name="Ehrenreich A."/>
            <person name="Gottschalk G."/>
        </authorList>
    </citation>
    <scope>NUCLEOTIDE SEQUENCE [LARGE SCALE GENOMIC DNA]</scope>
    <source>
        <strain>ATCC 14580 / DSM 13 / JCM 2505 / CCUG 7422 / NBRC 12200 / NCIMB 9375 / NCTC 10341 / NRRL NRS-1264 / Gibson 46</strain>
    </source>
</reference>
<reference key="2">
    <citation type="journal article" date="2004" name="Genome Biol.">
        <title>Complete genome sequence of the industrial bacterium Bacillus licheniformis and comparisons with closely related Bacillus species.</title>
        <authorList>
            <person name="Rey M.W."/>
            <person name="Ramaiya P."/>
            <person name="Nelson B.A."/>
            <person name="Brody-Karpin S.D."/>
            <person name="Zaretsky E.J."/>
            <person name="Tang M."/>
            <person name="Lopez de Leon A."/>
            <person name="Xiang H."/>
            <person name="Gusti V."/>
            <person name="Clausen I.G."/>
            <person name="Olsen P.B."/>
            <person name="Rasmussen M.D."/>
            <person name="Andersen J.T."/>
            <person name="Joergensen P.L."/>
            <person name="Larsen T.S."/>
            <person name="Sorokin A."/>
            <person name="Bolotin A."/>
            <person name="Lapidus A."/>
            <person name="Galleron N."/>
            <person name="Ehrlich S.D."/>
            <person name="Berka R.M."/>
        </authorList>
    </citation>
    <scope>NUCLEOTIDE SEQUENCE [LARGE SCALE GENOMIC DNA]</scope>
    <source>
        <strain>ATCC 14580 / DSM 13 / JCM 2505 / CCUG 7422 / NBRC 12200 / NCIMB 9375 / NCTC 10341 / NRRL NRS-1264 / Gibson 46</strain>
    </source>
</reference>
<protein>
    <recommendedName>
        <fullName evidence="1">UPF0349 protein BLi03401/BL03152</fullName>
    </recommendedName>
</protein>
<feature type="chain" id="PRO_0000165887" description="UPF0349 protein BLi03401/BL03152">
    <location>
        <begin position="1"/>
        <end position="78"/>
    </location>
</feature>
<comment type="similarity">
    <text evidence="1">Belongs to the UPF0349 family.</text>
</comment>
<organism>
    <name type="scientific">Bacillus licheniformis (strain ATCC 14580 / DSM 13 / JCM 2505 / CCUG 7422 / NBRC 12200 / NCIMB 9375 / NCTC 10341 / NRRL NRS-1264 / Gibson 46)</name>
    <dbReference type="NCBI Taxonomy" id="279010"/>
    <lineage>
        <taxon>Bacteria</taxon>
        <taxon>Bacillati</taxon>
        <taxon>Bacillota</taxon>
        <taxon>Bacilli</taxon>
        <taxon>Bacillales</taxon>
        <taxon>Bacillaceae</taxon>
        <taxon>Bacillus</taxon>
    </lineage>
</organism>
<sequence length="78" mass="8772">MFPIVEFCVSNLAQGSQEAKEILEKDPNLDVVEYGCLSYCGQCMQTMYALVNGEMVTANNPAELVENIYKFIDENELI</sequence>
<keyword id="KW-1185">Reference proteome</keyword>
<gene>
    <name type="ordered locus">BLi03401</name>
    <name type="ordered locus">BL03152</name>
</gene>
<accession>Q65FD4</accession>
<accession>Q62QU8</accession>
<name>Y3401_BACLD</name>
<proteinExistence type="inferred from homology"/>